<dbReference type="EC" id="2.7.2.8" evidence="1"/>
<dbReference type="EMBL" id="CP000304">
    <property type="protein sequence ID" value="ABP78175.1"/>
    <property type="molecule type" value="Genomic_DNA"/>
</dbReference>
<dbReference type="RefSeq" id="WP_011911704.1">
    <property type="nucleotide sequence ID" value="NC_009434.1"/>
</dbReference>
<dbReference type="SMR" id="A4VGS4"/>
<dbReference type="KEGG" id="psa:PST_0469"/>
<dbReference type="eggNOG" id="COG0548">
    <property type="taxonomic scope" value="Bacteria"/>
</dbReference>
<dbReference type="HOGENOM" id="CLU_053680_0_0_6"/>
<dbReference type="UniPathway" id="UPA00068">
    <property type="reaction ID" value="UER00107"/>
</dbReference>
<dbReference type="Proteomes" id="UP000000233">
    <property type="component" value="Chromosome"/>
</dbReference>
<dbReference type="GO" id="GO:0005737">
    <property type="term" value="C:cytoplasm"/>
    <property type="evidence" value="ECO:0007669"/>
    <property type="project" value="UniProtKB-SubCell"/>
</dbReference>
<dbReference type="GO" id="GO:0003991">
    <property type="term" value="F:acetylglutamate kinase activity"/>
    <property type="evidence" value="ECO:0007669"/>
    <property type="project" value="UniProtKB-UniRule"/>
</dbReference>
<dbReference type="GO" id="GO:0005524">
    <property type="term" value="F:ATP binding"/>
    <property type="evidence" value="ECO:0007669"/>
    <property type="project" value="UniProtKB-UniRule"/>
</dbReference>
<dbReference type="GO" id="GO:0042450">
    <property type="term" value="P:arginine biosynthetic process via ornithine"/>
    <property type="evidence" value="ECO:0007669"/>
    <property type="project" value="UniProtKB-UniRule"/>
</dbReference>
<dbReference type="GO" id="GO:0006526">
    <property type="term" value="P:L-arginine biosynthetic process"/>
    <property type="evidence" value="ECO:0007669"/>
    <property type="project" value="UniProtKB-UniPathway"/>
</dbReference>
<dbReference type="CDD" id="cd04250">
    <property type="entry name" value="AAK_NAGK-C"/>
    <property type="match status" value="1"/>
</dbReference>
<dbReference type="FunFam" id="3.40.1160.10:FF:000004">
    <property type="entry name" value="Acetylglutamate kinase"/>
    <property type="match status" value="1"/>
</dbReference>
<dbReference type="Gene3D" id="3.40.1160.10">
    <property type="entry name" value="Acetylglutamate kinase-like"/>
    <property type="match status" value="1"/>
</dbReference>
<dbReference type="HAMAP" id="MF_00082">
    <property type="entry name" value="ArgB"/>
    <property type="match status" value="1"/>
</dbReference>
<dbReference type="InterPro" id="IPR036393">
    <property type="entry name" value="AceGlu_kinase-like_sf"/>
</dbReference>
<dbReference type="InterPro" id="IPR004662">
    <property type="entry name" value="AcgluKinase_fam"/>
</dbReference>
<dbReference type="InterPro" id="IPR037528">
    <property type="entry name" value="ArgB"/>
</dbReference>
<dbReference type="InterPro" id="IPR001048">
    <property type="entry name" value="Asp/Glu/Uridylate_kinase"/>
</dbReference>
<dbReference type="InterPro" id="IPR001057">
    <property type="entry name" value="Glu/AcGlu_kinase"/>
</dbReference>
<dbReference type="InterPro" id="IPR041727">
    <property type="entry name" value="NAGK-C"/>
</dbReference>
<dbReference type="NCBIfam" id="TIGR00761">
    <property type="entry name" value="argB"/>
    <property type="match status" value="1"/>
</dbReference>
<dbReference type="PANTHER" id="PTHR23342">
    <property type="entry name" value="N-ACETYLGLUTAMATE SYNTHASE"/>
    <property type="match status" value="1"/>
</dbReference>
<dbReference type="PANTHER" id="PTHR23342:SF0">
    <property type="entry name" value="N-ACETYLGLUTAMATE SYNTHASE, MITOCHONDRIAL"/>
    <property type="match status" value="1"/>
</dbReference>
<dbReference type="Pfam" id="PF00696">
    <property type="entry name" value="AA_kinase"/>
    <property type="match status" value="1"/>
</dbReference>
<dbReference type="PIRSF" id="PIRSF000728">
    <property type="entry name" value="NAGK"/>
    <property type="match status" value="1"/>
</dbReference>
<dbReference type="PRINTS" id="PR00474">
    <property type="entry name" value="GLU5KINASE"/>
</dbReference>
<dbReference type="SUPFAM" id="SSF53633">
    <property type="entry name" value="Carbamate kinase-like"/>
    <property type="match status" value="1"/>
</dbReference>
<comment type="function">
    <text evidence="1">Catalyzes the ATP-dependent phosphorylation of N-acetyl-L-glutamate.</text>
</comment>
<comment type="catalytic activity">
    <reaction evidence="1">
        <text>N-acetyl-L-glutamate + ATP = N-acetyl-L-glutamyl 5-phosphate + ADP</text>
        <dbReference type="Rhea" id="RHEA:14629"/>
        <dbReference type="ChEBI" id="CHEBI:30616"/>
        <dbReference type="ChEBI" id="CHEBI:44337"/>
        <dbReference type="ChEBI" id="CHEBI:57936"/>
        <dbReference type="ChEBI" id="CHEBI:456216"/>
        <dbReference type="EC" id="2.7.2.8"/>
    </reaction>
</comment>
<comment type="pathway">
    <text evidence="1">Amino-acid biosynthesis; L-arginine biosynthesis; N(2)-acetyl-L-ornithine from L-glutamate: step 2/4.</text>
</comment>
<comment type="subcellular location">
    <subcellularLocation>
        <location evidence="1">Cytoplasm</location>
    </subcellularLocation>
</comment>
<comment type="similarity">
    <text evidence="1">Belongs to the acetylglutamate kinase family. ArgB subfamily.</text>
</comment>
<gene>
    <name evidence="1" type="primary">argB</name>
    <name type="ordered locus">PST_0469</name>
</gene>
<evidence type="ECO:0000255" key="1">
    <source>
        <dbReference type="HAMAP-Rule" id="MF_00082"/>
    </source>
</evidence>
<proteinExistence type="inferred from homology"/>
<protein>
    <recommendedName>
        <fullName evidence="1">Acetylglutamate kinase</fullName>
        <ecNumber evidence="1">2.7.2.8</ecNumber>
    </recommendedName>
    <alternativeName>
        <fullName evidence="1">N-acetyl-L-glutamate 5-phosphotransferase</fullName>
    </alternativeName>
    <alternativeName>
        <fullName evidence="1">NAG kinase</fullName>
        <shortName evidence="1">NAGK</shortName>
    </alternativeName>
</protein>
<reference key="1">
    <citation type="journal article" date="2008" name="Proc. Natl. Acad. Sci. U.S.A.">
        <title>Nitrogen fixation island and rhizosphere competence traits in the genome of root-associated Pseudomonas stutzeri A1501.</title>
        <authorList>
            <person name="Yan Y."/>
            <person name="Yang J."/>
            <person name="Dou Y."/>
            <person name="Chen M."/>
            <person name="Ping S."/>
            <person name="Peng J."/>
            <person name="Lu W."/>
            <person name="Zhang W."/>
            <person name="Yao Z."/>
            <person name="Li H."/>
            <person name="Liu W."/>
            <person name="He S."/>
            <person name="Geng L."/>
            <person name="Zhang X."/>
            <person name="Yang F."/>
            <person name="Yu H."/>
            <person name="Zhan Y."/>
            <person name="Li D."/>
            <person name="Lin Z."/>
            <person name="Wang Y."/>
            <person name="Elmerich C."/>
            <person name="Lin M."/>
            <person name="Jin Q."/>
        </authorList>
    </citation>
    <scope>NUCLEOTIDE SEQUENCE [LARGE SCALE GENOMIC DNA]</scope>
    <source>
        <strain>A1501</strain>
    </source>
</reference>
<feature type="chain" id="PRO_1000010532" description="Acetylglutamate kinase">
    <location>
        <begin position="1"/>
        <end position="300"/>
    </location>
</feature>
<feature type="binding site" evidence="1">
    <location>
        <begin position="68"/>
        <end position="69"/>
    </location>
    <ligand>
        <name>substrate</name>
    </ligand>
</feature>
<feature type="binding site" evidence="1">
    <location>
        <position position="90"/>
    </location>
    <ligand>
        <name>substrate</name>
    </ligand>
</feature>
<feature type="binding site" evidence="1">
    <location>
        <position position="195"/>
    </location>
    <ligand>
        <name>substrate</name>
    </ligand>
</feature>
<feature type="site" description="Transition state stabilizer" evidence="1">
    <location>
        <position position="33"/>
    </location>
</feature>
<feature type="site" description="Transition state stabilizer" evidence="1">
    <location>
        <position position="255"/>
    </location>
</feature>
<accession>A4VGS4</accession>
<sequence>MTLSREAATQFAKVLSEALPYIRRFVGKTLVIKYGGNAMESEELKTGFARDIVLMKAVGINPVVVHGGGPQIGDLLKRLNIESHFIDGMRVTDSQTMDVVEMVLGGQVNKSIVSLINQHGGSAIGLTGKDAGLIRARKLKATRQTPEMTKPEIIDIGHVGEVTGVNAELLEMLVQGNFIPVIAPIGVGENGESYNINADLVAGKVAEALKAEKLMLLTNIAGLMDKQGNVLTGLSTAQVDALIADGTIYGGMLPKIRCALEAVQGGVNSAHIIDGRVPNAVLLEIFTDVGVGTLITNSQR</sequence>
<keyword id="KW-0028">Amino-acid biosynthesis</keyword>
<keyword id="KW-0055">Arginine biosynthesis</keyword>
<keyword id="KW-0067">ATP-binding</keyword>
<keyword id="KW-0963">Cytoplasm</keyword>
<keyword id="KW-0418">Kinase</keyword>
<keyword id="KW-0547">Nucleotide-binding</keyword>
<keyword id="KW-1185">Reference proteome</keyword>
<keyword id="KW-0808">Transferase</keyword>
<name>ARGB_STUS1</name>
<organism>
    <name type="scientific">Stutzerimonas stutzeri (strain A1501)</name>
    <name type="common">Pseudomonas stutzeri</name>
    <dbReference type="NCBI Taxonomy" id="379731"/>
    <lineage>
        <taxon>Bacteria</taxon>
        <taxon>Pseudomonadati</taxon>
        <taxon>Pseudomonadota</taxon>
        <taxon>Gammaproteobacteria</taxon>
        <taxon>Pseudomonadales</taxon>
        <taxon>Pseudomonadaceae</taxon>
        <taxon>Stutzerimonas</taxon>
    </lineage>
</organism>